<dbReference type="EC" id="7.1.1.-" evidence="1"/>
<dbReference type="EMBL" id="AB086179">
    <property type="protein sequence ID" value="BAC55393.1"/>
    <property type="molecule type" value="Genomic_DNA"/>
</dbReference>
<dbReference type="EMBL" id="AB087475">
    <property type="protein sequence ID" value="BAC55494.1"/>
    <property type="molecule type" value="mRNA"/>
</dbReference>
<dbReference type="SMR" id="P0CC29"/>
<dbReference type="GO" id="GO:0009535">
    <property type="term" value="C:chloroplast thylakoid membrane"/>
    <property type="evidence" value="ECO:0007669"/>
    <property type="project" value="UniProtKB-SubCell"/>
</dbReference>
<dbReference type="GO" id="GO:0008137">
    <property type="term" value="F:NADH dehydrogenase (ubiquinone) activity"/>
    <property type="evidence" value="ECO:0007669"/>
    <property type="project" value="InterPro"/>
</dbReference>
<dbReference type="GO" id="GO:0048038">
    <property type="term" value="F:quinone binding"/>
    <property type="evidence" value="ECO:0007669"/>
    <property type="project" value="UniProtKB-KW"/>
</dbReference>
<dbReference type="GO" id="GO:0042773">
    <property type="term" value="P:ATP synthesis coupled electron transport"/>
    <property type="evidence" value="ECO:0007669"/>
    <property type="project" value="InterPro"/>
</dbReference>
<dbReference type="GO" id="GO:0019684">
    <property type="term" value="P:photosynthesis, light reaction"/>
    <property type="evidence" value="ECO:0007669"/>
    <property type="project" value="UniProtKB-UniRule"/>
</dbReference>
<dbReference type="HAMAP" id="MF_00445">
    <property type="entry name" value="NDH1_NuoN_1"/>
    <property type="match status" value="1"/>
</dbReference>
<dbReference type="InterPro" id="IPR010096">
    <property type="entry name" value="NADH-Q_OxRdtase_suN/2"/>
</dbReference>
<dbReference type="InterPro" id="IPR001750">
    <property type="entry name" value="ND/Mrp_TM"/>
</dbReference>
<dbReference type="InterPro" id="IPR045693">
    <property type="entry name" value="Ndh2_N"/>
</dbReference>
<dbReference type="NCBIfam" id="TIGR01770">
    <property type="entry name" value="NDH_I_N"/>
    <property type="match status" value="1"/>
</dbReference>
<dbReference type="NCBIfam" id="NF002701">
    <property type="entry name" value="PRK02504.1"/>
    <property type="match status" value="1"/>
</dbReference>
<dbReference type="PANTHER" id="PTHR22773">
    <property type="entry name" value="NADH DEHYDROGENASE"/>
    <property type="match status" value="1"/>
</dbReference>
<dbReference type="Pfam" id="PF19530">
    <property type="entry name" value="Ndh2_N"/>
    <property type="match status" value="1"/>
</dbReference>
<dbReference type="Pfam" id="PF00361">
    <property type="entry name" value="Proton_antipo_M"/>
    <property type="match status" value="1"/>
</dbReference>
<dbReference type="PRINTS" id="PR01434">
    <property type="entry name" value="NADHDHGNASE5"/>
</dbReference>
<name>NU2C1_ANTAG</name>
<keyword id="KW-0150">Chloroplast</keyword>
<keyword id="KW-0472">Membrane</keyword>
<keyword id="KW-0520">NAD</keyword>
<keyword id="KW-0521">NADP</keyword>
<keyword id="KW-0934">Plastid</keyword>
<keyword id="KW-0618">Plastoquinone</keyword>
<keyword id="KW-0874">Quinone</keyword>
<keyword id="KW-0691">RNA editing</keyword>
<keyword id="KW-0793">Thylakoid</keyword>
<keyword id="KW-1278">Translocase</keyword>
<keyword id="KW-0812">Transmembrane</keyword>
<keyword id="KW-1133">Transmembrane helix</keyword>
<keyword id="KW-0813">Transport</keyword>
<evidence type="ECO:0000255" key="1">
    <source>
        <dbReference type="HAMAP-Rule" id="MF_00445"/>
    </source>
</evidence>
<evidence type="ECO:0000269" key="2">
    <source>
    </source>
</evidence>
<evidence type="ECO:0000269" key="3">
    <source>
    </source>
</evidence>
<feature type="chain" id="PRO_0000117654" description="NAD(P)H-quinone oxidoreductase subunit 2 A, chloroplastic">
    <location>
        <begin position="1"/>
        <end position="500"/>
    </location>
</feature>
<feature type="transmembrane region" description="Helical" evidence="1">
    <location>
        <begin position="14"/>
        <end position="34"/>
    </location>
</feature>
<feature type="transmembrane region" description="Helical" evidence="1">
    <location>
        <begin position="41"/>
        <end position="61"/>
    </location>
</feature>
<feature type="transmembrane region" description="Helical" evidence="1">
    <location>
        <begin position="78"/>
        <end position="98"/>
    </location>
</feature>
<feature type="transmembrane region" description="Helical" evidence="1">
    <location>
        <begin position="116"/>
        <end position="136"/>
    </location>
</feature>
<feature type="transmembrane region" description="Helical" evidence="1">
    <location>
        <begin position="166"/>
        <end position="186"/>
    </location>
</feature>
<feature type="transmembrane region" description="Helical" evidence="1">
    <location>
        <begin position="211"/>
        <end position="231"/>
    </location>
</feature>
<feature type="transmembrane region" description="Helical" evidence="1">
    <location>
        <begin position="242"/>
        <end position="262"/>
    </location>
</feature>
<feature type="transmembrane region" description="Helical" evidence="1">
    <location>
        <begin position="277"/>
        <end position="297"/>
    </location>
</feature>
<feature type="transmembrane region" description="Helical" evidence="1">
    <location>
        <begin position="305"/>
        <end position="325"/>
    </location>
</feature>
<feature type="transmembrane region" description="Helical" evidence="1">
    <location>
        <begin position="335"/>
        <end position="355"/>
    </location>
</feature>
<feature type="transmembrane region" description="Helical" evidence="1">
    <location>
        <begin position="376"/>
        <end position="396"/>
    </location>
</feature>
<feature type="transmembrane region" description="Helical" evidence="1">
    <location>
        <begin position="409"/>
        <end position="429"/>
    </location>
</feature>
<feature type="transmembrane region" description="Helical" evidence="1">
    <location>
        <begin position="467"/>
        <end position="487"/>
    </location>
</feature>
<sequence>MKLDFGSFLSDGSSILPECILISSLIIILLIDLTSEKKTYWLYFISLTSLIISITVLLFQLKEEPIFSFSGSFQTDGFNGIFRISIAFSSLLCIPLSMEYMKCTKMAITESLIFLLTATIGGMFLCGANDLIIIFITLECLSLSSYLLSGYTKKDVRSNEAAMKYLLMGGASSSILAYGFSWLYGLSGGKIQLQEIFNGLINTQMYNSTSISIVLIFIIAGIAFKLSLVPFHQWTPDVYEGAPTSVIAFFSVTSKIAGLALATRIFNTVFFSSLNEWHLILEIIAILSMILGNFIAITQTSMKRMLAYSSISQIGYFMIGVIAGDSNGYASMITYMLFYIFMNLGTFACITLFGLRTGTDNIRDYAGLYKKDPLLASFLALSLLSLGGIPPLAGFFGKLYLFWCGWKAGLYLSVSVGLFTSVISIYYYLRIVKLIVTKENEETTSYIRKYKTSSNYLVSKSPIEFSIIICVIGSTFSGIVINPVIAIVEKTISLSSFINN</sequence>
<comment type="function">
    <text evidence="1">NDH shuttles electrons from NAD(P)H:plastoquinone, via FMN and iron-sulfur (Fe-S) centers, to quinones in the photosynthetic chain and possibly in a chloroplast respiratory chain. The immediate electron acceptor for the enzyme in this species is believed to be plastoquinone. Couples the redox reaction to proton translocation, and thus conserves the redox energy in a proton gradient.</text>
</comment>
<comment type="catalytic activity">
    <reaction evidence="1">
        <text>a plastoquinone + NADH + (n+1) H(+)(in) = a plastoquinol + NAD(+) + n H(+)(out)</text>
        <dbReference type="Rhea" id="RHEA:42608"/>
        <dbReference type="Rhea" id="RHEA-COMP:9561"/>
        <dbReference type="Rhea" id="RHEA-COMP:9562"/>
        <dbReference type="ChEBI" id="CHEBI:15378"/>
        <dbReference type="ChEBI" id="CHEBI:17757"/>
        <dbReference type="ChEBI" id="CHEBI:57540"/>
        <dbReference type="ChEBI" id="CHEBI:57945"/>
        <dbReference type="ChEBI" id="CHEBI:62192"/>
    </reaction>
</comment>
<comment type="catalytic activity">
    <reaction evidence="1">
        <text>a plastoquinone + NADPH + (n+1) H(+)(in) = a plastoquinol + NADP(+) + n H(+)(out)</text>
        <dbReference type="Rhea" id="RHEA:42612"/>
        <dbReference type="Rhea" id="RHEA-COMP:9561"/>
        <dbReference type="Rhea" id="RHEA-COMP:9562"/>
        <dbReference type="ChEBI" id="CHEBI:15378"/>
        <dbReference type="ChEBI" id="CHEBI:17757"/>
        <dbReference type="ChEBI" id="CHEBI:57783"/>
        <dbReference type="ChEBI" id="CHEBI:58349"/>
        <dbReference type="ChEBI" id="CHEBI:62192"/>
    </reaction>
</comment>
<comment type="subunit">
    <text evidence="1">NDH is composed of at least 16 different subunits, 5 of which are encoded in the nucleus.</text>
</comment>
<comment type="subcellular location">
    <subcellularLocation>
        <location evidence="1">Plastid</location>
        <location evidence="1">Chloroplast thylakoid membrane</location>
        <topology evidence="1">Multi-pass membrane protein</topology>
    </subcellularLocation>
</comment>
<comment type="RNA editing">
    <location>
        <position position="89" evidence="2 3"/>
    </location>
    <location>
        <position position="120" evidence="2 3"/>
    </location>
    <location>
        <position position="145" evidence="2 3"/>
    </location>
    <location>
        <position position="157" evidence="2 3"/>
    </location>
    <location>
        <position position="158" evidence="2 3"/>
    </location>
    <location>
        <position position="167" evidence="2 3"/>
    </location>
    <location>
        <position position="174" evidence="2 3"/>
    </location>
    <location>
        <position position="180" evidence="2 3"/>
    </location>
    <location>
        <position position="197" evidence="2 3"/>
    </location>
    <location>
        <position position="294" evidence="2 3"/>
    </location>
    <location>
        <position position="310" evidence="2 3"/>
    </location>
    <location>
        <position position="335" evidence="2 3"/>
    </location>
    <location>
        <position position="341" evidence="2 3"/>
    </location>
    <location>
        <position position="368" evidence="2 3"/>
    </location>
    <location>
        <position position="373" evidence="2 3"/>
    </location>
    <location>
        <position position="379" evidence="2 3"/>
    </location>
    <location>
        <position position="399" evidence="2 3"/>
    </location>
    <location>
        <position position="402" evidence="2 3"/>
    </location>
    <location>
        <position position="454" evidence="2 3"/>
    </location>
    <location>
        <position position="476" evidence="2 3"/>
    </location>
    <text>The nonsense codon at position 157 is modified to a sense codon.</text>
</comment>
<comment type="similarity">
    <text evidence="1">Belongs to the complex I subunit 2 family.</text>
</comment>
<protein>
    <recommendedName>
        <fullName evidence="1">NAD(P)H-quinone oxidoreductase subunit 2 A, chloroplastic</fullName>
        <ecNumber evidence="1">7.1.1.-</ecNumber>
    </recommendedName>
    <alternativeName>
        <fullName evidence="1">NAD(P)H dehydrogenase, subunit 2 A</fullName>
    </alternativeName>
    <alternativeName>
        <fullName evidence="1">NADH-plastoquinone oxidoreductase subunit 2 A</fullName>
    </alternativeName>
</protein>
<reference key="1">
    <citation type="journal article" date="2003" name="Nucleic Acids Res.">
        <title>The complete nucleotide sequence of the hornwort (Anthoceros formosae) chloroplast genome: insight into the earliest land plants.</title>
        <authorList>
            <person name="Kugita M."/>
            <person name="Kaneko A."/>
            <person name="Yamamoto Y."/>
            <person name="Takeya Y."/>
            <person name="Matsumoto T."/>
            <person name="Yoshinaga K."/>
        </authorList>
    </citation>
    <scope>NUCLEOTIDE SEQUENCE [LARGE SCALE GENOMIC DNA]</scope>
    <scope>RNA EDITING</scope>
</reference>
<reference key="2">
    <citation type="journal article" date="2003" name="Nucleic Acids Res.">
        <title>RNA editing in hornwort chloroplasts makes more than half the genes functional.</title>
        <authorList>
            <person name="Kugita M."/>
            <person name="Yamamoto Y."/>
            <person name="Fujikawa T."/>
            <person name="Matsumoto T."/>
            <person name="Yoshinaga K."/>
        </authorList>
    </citation>
    <scope>NUCLEOTIDE SEQUENCE [MRNA]</scope>
    <scope>RNA EDITING</scope>
    <source>
        <tissue>Thallus</tissue>
    </source>
</reference>
<accession>P0CC29</accession>
<accession>Q85CP2</accession>
<organism>
    <name type="scientific">Anthoceros angustus</name>
    <name type="common">Hornwort</name>
    <name type="synonym">Anthoceros formosae</name>
    <dbReference type="NCBI Taxonomy" id="48387"/>
    <lineage>
        <taxon>Eukaryota</taxon>
        <taxon>Viridiplantae</taxon>
        <taxon>Streptophyta</taxon>
        <taxon>Embryophyta</taxon>
        <taxon>Anthocerotophyta</taxon>
        <taxon>Anthocerotopsida</taxon>
        <taxon>Anthocerotidae</taxon>
        <taxon>Anthocerotales</taxon>
        <taxon>Anthocerotaceae</taxon>
        <taxon>Anthoceros</taxon>
    </lineage>
</organism>
<gene>
    <name evidence="1" type="primary">ndhB1</name>
</gene>
<proteinExistence type="evidence at transcript level"/>
<geneLocation type="chloroplast"/>